<feature type="chain" id="PRO_1000002163" description="SsrA-binding protein">
    <location>
        <begin position="1"/>
        <end position="155"/>
    </location>
</feature>
<feature type="region of interest" description="Disordered" evidence="2">
    <location>
        <begin position="135"/>
        <end position="155"/>
    </location>
</feature>
<feature type="compositionally biased region" description="Basic and acidic residues" evidence="2">
    <location>
        <begin position="135"/>
        <end position="147"/>
    </location>
</feature>
<sequence>MAKGEGHILAQNKKARHDYHIVETVEAGIVLTGTEIKSVRAARIQLKDGFAQIKNGEAWLVNVHIAPFEQGNIWNADPERTRKLLLKKREITHLANELKGSGMTLAPLKVYLKDGFAKVLIGLAKGKHEYDKRETIKRRDQERDIKKQMKHYNAR</sequence>
<protein>
    <recommendedName>
        <fullName evidence="1">SsrA-binding protein</fullName>
    </recommendedName>
    <alternativeName>
        <fullName evidence="1">Small protein B</fullName>
    </alternativeName>
</protein>
<reference key="1">
    <citation type="journal article" date="2006" name="Proc. Natl. Acad. Sci. U.S.A.">
        <title>Molecular genetic anatomy of inter- and intraserotype variation in the human bacterial pathogen group A Streptococcus.</title>
        <authorList>
            <person name="Beres S.B."/>
            <person name="Richter E.W."/>
            <person name="Nagiec M.J."/>
            <person name="Sumby P."/>
            <person name="Porcella S.F."/>
            <person name="DeLeo F.R."/>
            <person name="Musser J.M."/>
        </authorList>
    </citation>
    <scope>NUCLEOTIDE SEQUENCE [LARGE SCALE GENOMIC DNA]</scope>
    <source>
        <strain>MGAS2096</strain>
    </source>
</reference>
<evidence type="ECO:0000255" key="1">
    <source>
        <dbReference type="HAMAP-Rule" id="MF_00023"/>
    </source>
</evidence>
<evidence type="ECO:0000256" key="2">
    <source>
        <dbReference type="SAM" id="MobiDB-lite"/>
    </source>
</evidence>
<name>SSRP_STRPB</name>
<dbReference type="EMBL" id="CP000261">
    <property type="protein sequence ID" value="ABF35486.1"/>
    <property type="molecule type" value="Genomic_DNA"/>
</dbReference>
<dbReference type="SMR" id="Q1JD22"/>
<dbReference type="KEGG" id="spj:MGAS2096_Spy0434"/>
<dbReference type="HOGENOM" id="CLU_108953_0_0_9"/>
<dbReference type="GO" id="GO:0005829">
    <property type="term" value="C:cytosol"/>
    <property type="evidence" value="ECO:0007669"/>
    <property type="project" value="TreeGrafter"/>
</dbReference>
<dbReference type="GO" id="GO:0003723">
    <property type="term" value="F:RNA binding"/>
    <property type="evidence" value="ECO:0007669"/>
    <property type="project" value="UniProtKB-UniRule"/>
</dbReference>
<dbReference type="GO" id="GO:0070929">
    <property type="term" value="P:trans-translation"/>
    <property type="evidence" value="ECO:0007669"/>
    <property type="project" value="UniProtKB-UniRule"/>
</dbReference>
<dbReference type="CDD" id="cd09294">
    <property type="entry name" value="SmpB"/>
    <property type="match status" value="1"/>
</dbReference>
<dbReference type="Gene3D" id="2.40.280.10">
    <property type="match status" value="1"/>
</dbReference>
<dbReference type="HAMAP" id="MF_00023">
    <property type="entry name" value="SmpB"/>
    <property type="match status" value="1"/>
</dbReference>
<dbReference type="InterPro" id="IPR023620">
    <property type="entry name" value="SmpB"/>
</dbReference>
<dbReference type="InterPro" id="IPR000037">
    <property type="entry name" value="SsrA-bd_prot"/>
</dbReference>
<dbReference type="InterPro" id="IPR020081">
    <property type="entry name" value="SsrA-bd_prot_CS"/>
</dbReference>
<dbReference type="NCBIfam" id="NF003843">
    <property type="entry name" value="PRK05422.1"/>
    <property type="match status" value="1"/>
</dbReference>
<dbReference type="NCBIfam" id="TIGR00086">
    <property type="entry name" value="smpB"/>
    <property type="match status" value="1"/>
</dbReference>
<dbReference type="PANTHER" id="PTHR30308:SF2">
    <property type="entry name" value="SSRA-BINDING PROTEIN"/>
    <property type="match status" value="1"/>
</dbReference>
<dbReference type="PANTHER" id="PTHR30308">
    <property type="entry name" value="TMRNA-BINDING COMPONENT OF TRANS-TRANSLATION TAGGING COMPLEX"/>
    <property type="match status" value="1"/>
</dbReference>
<dbReference type="Pfam" id="PF01668">
    <property type="entry name" value="SmpB"/>
    <property type="match status" value="1"/>
</dbReference>
<dbReference type="SUPFAM" id="SSF74982">
    <property type="entry name" value="Small protein B (SmpB)"/>
    <property type="match status" value="1"/>
</dbReference>
<dbReference type="PROSITE" id="PS01317">
    <property type="entry name" value="SSRP"/>
    <property type="match status" value="1"/>
</dbReference>
<gene>
    <name evidence="1" type="primary">smpB</name>
    <name type="ordered locus">MGAS2096_Spy0434</name>
</gene>
<accession>Q1JD22</accession>
<organism>
    <name type="scientific">Streptococcus pyogenes serotype M12 (strain MGAS2096)</name>
    <dbReference type="NCBI Taxonomy" id="370553"/>
    <lineage>
        <taxon>Bacteria</taxon>
        <taxon>Bacillati</taxon>
        <taxon>Bacillota</taxon>
        <taxon>Bacilli</taxon>
        <taxon>Lactobacillales</taxon>
        <taxon>Streptococcaceae</taxon>
        <taxon>Streptococcus</taxon>
    </lineage>
</organism>
<proteinExistence type="inferred from homology"/>
<keyword id="KW-0963">Cytoplasm</keyword>
<keyword id="KW-0694">RNA-binding</keyword>
<comment type="function">
    <text evidence="1">Required for rescue of stalled ribosomes mediated by trans-translation. Binds to transfer-messenger RNA (tmRNA), required for stable association of tmRNA with ribosomes. tmRNA and SmpB together mimic tRNA shape, replacing the anticodon stem-loop with SmpB. tmRNA is encoded by the ssrA gene; the 2 termini fold to resemble tRNA(Ala) and it encodes a 'tag peptide', a short internal open reading frame. During trans-translation Ala-aminoacylated tmRNA acts like a tRNA, entering the A-site of stalled ribosomes, displacing the stalled mRNA. The ribosome then switches to translate the ORF on the tmRNA; the nascent peptide is terminated with the 'tag peptide' encoded by the tmRNA and targeted for degradation. The ribosome is freed to recommence translation, which seems to be the essential function of trans-translation.</text>
</comment>
<comment type="subcellular location">
    <subcellularLocation>
        <location evidence="1">Cytoplasm</location>
    </subcellularLocation>
    <text evidence="1">The tmRNA-SmpB complex associates with stalled 70S ribosomes.</text>
</comment>
<comment type="similarity">
    <text evidence="1">Belongs to the SmpB family.</text>
</comment>